<evidence type="ECO:0000255" key="1">
    <source>
        <dbReference type="HAMAP-Rule" id="MF_00147"/>
    </source>
</evidence>
<reference key="1">
    <citation type="journal article" date="2004" name="Nat. Biotechnol.">
        <title>The genome sequence of the anaerobic, sulfate-reducing bacterium Desulfovibrio vulgaris Hildenborough.</title>
        <authorList>
            <person name="Heidelberg J.F."/>
            <person name="Seshadri R."/>
            <person name="Haveman S.A."/>
            <person name="Hemme C.L."/>
            <person name="Paulsen I.T."/>
            <person name="Kolonay J.F."/>
            <person name="Eisen J.A."/>
            <person name="Ward N.L."/>
            <person name="Methe B.A."/>
            <person name="Brinkac L.M."/>
            <person name="Daugherty S.C."/>
            <person name="DeBoy R.T."/>
            <person name="Dodson R.J."/>
            <person name="Durkin A.S."/>
            <person name="Madupu R."/>
            <person name="Nelson W.C."/>
            <person name="Sullivan S.A."/>
            <person name="Fouts D.E."/>
            <person name="Haft D.H."/>
            <person name="Selengut J."/>
            <person name="Peterson J.D."/>
            <person name="Davidsen T.M."/>
            <person name="Zafar N."/>
            <person name="Zhou L."/>
            <person name="Radune D."/>
            <person name="Dimitrov G."/>
            <person name="Hance M."/>
            <person name="Tran K."/>
            <person name="Khouri H.M."/>
            <person name="Gill J."/>
            <person name="Utterback T.R."/>
            <person name="Feldblyum T.V."/>
            <person name="Wall J.D."/>
            <person name="Voordouw G."/>
            <person name="Fraser C.M."/>
        </authorList>
    </citation>
    <scope>NUCLEOTIDE SEQUENCE [LARGE SCALE GENOMIC DNA]</scope>
    <source>
        <strain>ATCC 29579 / DSM 644 / CCUG 34227 / NCIMB 8303 / VKM B-1760 / Hildenborough</strain>
    </source>
</reference>
<feature type="chain" id="PRO_1000071484" description="Triosephosphate isomerase">
    <location>
        <begin position="1"/>
        <end position="251"/>
    </location>
</feature>
<feature type="active site" description="Electrophile" evidence="1">
    <location>
        <position position="97"/>
    </location>
</feature>
<feature type="active site" description="Proton acceptor" evidence="1">
    <location>
        <position position="170"/>
    </location>
</feature>
<feature type="binding site" evidence="1">
    <location>
        <begin position="8"/>
        <end position="10"/>
    </location>
    <ligand>
        <name>substrate</name>
    </ligand>
</feature>
<feature type="binding site" evidence="1">
    <location>
        <position position="176"/>
    </location>
    <ligand>
        <name>substrate</name>
    </ligand>
</feature>
<feature type="binding site" evidence="1">
    <location>
        <position position="215"/>
    </location>
    <ligand>
        <name>substrate</name>
    </ligand>
</feature>
<feature type="binding site" evidence="1">
    <location>
        <begin position="236"/>
        <end position="237"/>
    </location>
    <ligand>
        <name>substrate</name>
    </ligand>
</feature>
<proteinExistence type="inferred from homology"/>
<organism>
    <name type="scientific">Nitratidesulfovibrio vulgaris (strain ATCC 29579 / DSM 644 / CCUG 34227 / NCIMB 8303 / VKM B-1760 / Hildenborough)</name>
    <name type="common">Desulfovibrio vulgaris</name>
    <dbReference type="NCBI Taxonomy" id="882"/>
    <lineage>
        <taxon>Bacteria</taxon>
        <taxon>Pseudomonadati</taxon>
        <taxon>Thermodesulfobacteriota</taxon>
        <taxon>Desulfovibrionia</taxon>
        <taxon>Desulfovibrionales</taxon>
        <taxon>Desulfovibrionaceae</taxon>
        <taxon>Nitratidesulfovibrio</taxon>
    </lineage>
</organism>
<protein>
    <recommendedName>
        <fullName evidence="1">Triosephosphate isomerase</fullName>
        <shortName evidence="1">TIM</shortName>
        <shortName evidence="1">TPI</shortName>
        <ecNumber evidence="1">5.3.1.1</ecNumber>
    </recommendedName>
    <alternativeName>
        <fullName evidence="1">Triose-phosphate isomerase</fullName>
    </alternativeName>
</protein>
<name>TPIS_NITV2</name>
<accession>Q72BF9</accession>
<sequence length="251" mass="26630">MKKLIAANWKMYKTIDEARATGRELVSAVAGSLPADREVLVCPPFTALHALHDTFKDVEGFAIGGQDVYPATEGAYTGEIAPGMLLDAGCGWVLTGHSERRHILGEDDETVARKTAFSLKAGLRVVLCIGEKLDEREAGRLEDVLAHQLQVGLADVDATYVPQSLVVAYEPVWAIGTGKVAGPAEVVEAHALVRSLLEARYGRDGAAIRILYGGSVKPDNAAELLSLDNVDGLLVGGASLQAVSFSRIILA</sequence>
<dbReference type="EC" id="5.3.1.1" evidence="1"/>
<dbReference type="EMBL" id="AE017285">
    <property type="protein sequence ID" value="AAS96154.1"/>
    <property type="molecule type" value="Genomic_DNA"/>
</dbReference>
<dbReference type="RefSeq" id="WP_010938966.1">
    <property type="nucleotide sequence ID" value="NC_002937.3"/>
</dbReference>
<dbReference type="RefSeq" id="YP_010895.1">
    <property type="nucleotide sequence ID" value="NC_002937.3"/>
</dbReference>
<dbReference type="SMR" id="Q72BF9"/>
<dbReference type="IntAct" id="Q72BF9">
    <property type="interactions" value="2"/>
</dbReference>
<dbReference type="STRING" id="882.DVU_1677"/>
<dbReference type="PaxDb" id="882-DVU_1677"/>
<dbReference type="EnsemblBacteria" id="AAS96154">
    <property type="protein sequence ID" value="AAS96154"/>
    <property type="gene ID" value="DVU_1677"/>
</dbReference>
<dbReference type="KEGG" id="dvu:DVU_1677"/>
<dbReference type="PATRIC" id="fig|882.5.peg.1550"/>
<dbReference type="eggNOG" id="COG0149">
    <property type="taxonomic scope" value="Bacteria"/>
</dbReference>
<dbReference type="HOGENOM" id="CLU_024251_2_0_7"/>
<dbReference type="OrthoDB" id="9809429at2"/>
<dbReference type="PhylomeDB" id="Q72BF9"/>
<dbReference type="UniPathway" id="UPA00109">
    <property type="reaction ID" value="UER00189"/>
</dbReference>
<dbReference type="UniPathway" id="UPA00138"/>
<dbReference type="Proteomes" id="UP000002194">
    <property type="component" value="Chromosome"/>
</dbReference>
<dbReference type="GO" id="GO:0005829">
    <property type="term" value="C:cytosol"/>
    <property type="evidence" value="ECO:0007669"/>
    <property type="project" value="TreeGrafter"/>
</dbReference>
<dbReference type="GO" id="GO:0004807">
    <property type="term" value="F:triose-phosphate isomerase activity"/>
    <property type="evidence" value="ECO:0007669"/>
    <property type="project" value="UniProtKB-UniRule"/>
</dbReference>
<dbReference type="GO" id="GO:0006094">
    <property type="term" value="P:gluconeogenesis"/>
    <property type="evidence" value="ECO:0007669"/>
    <property type="project" value="UniProtKB-UniRule"/>
</dbReference>
<dbReference type="GO" id="GO:0046166">
    <property type="term" value="P:glyceraldehyde-3-phosphate biosynthetic process"/>
    <property type="evidence" value="ECO:0007669"/>
    <property type="project" value="TreeGrafter"/>
</dbReference>
<dbReference type="GO" id="GO:0019563">
    <property type="term" value="P:glycerol catabolic process"/>
    <property type="evidence" value="ECO:0007669"/>
    <property type="project" value="TreeGrafter"/>
</dbReference>
<dbReference type="GO" id="GO:0006096">
    <property type="term" value="P:glycolytic process"/>
    <property type="evidence" value="ECO:0007669"/>
    <property type="project" value="UniProtKB-UniRule"/>
</dbReference>
<dbReference type="CDD" id="cd00311">
    <property type="entry name" value="TIM"/>
    <property type="match status" value="1"/>
</dbReference>
<dbReference type="FunFam" id="3.20.20.70:FF:000016">
    <property type="entry name" value="Triosephosphate isomerase"/>
    <property type="match status" value="1"/>
</dbReference>
<dbReference type="Gene3D" id="3.20.20.70">
    <property type="entry name" value="Aldolase class I"/>
    <property type="match status" value="1"/>
</dbReference>
<dbReference type="HAMAP" id="MF_00147_B">
    <property type="entry name" value="TIM_B"/>
    <property type="match status" value="1"/>
</dbReference>
<dbReference type="InterPro" id="IPR013785">
    <property type="entry name" value="Aldolase_TIM"/>
</dbReference>
<dbReference type="InterPro" id="IPR035990">
    <property type="entry name" value="TIM_sf"/>
</dbReference>
<dbReference type="InterPro" id="IPR022896">
    <property type="entry name" value="TrioseP_Isoase_bac/euk"/>
</dbReference>
<dbReference type="InterPro" id="IPR000652">
    <property type="entry name" value="Triosephosphate_isomerase"/>
</dbReference>
<dbReference type="InterPro" id="IPR020861">
    <property type="entry name" value="Triosephosphate_isomerase_AS"/>
</dbReference>
<dbReference type="NCBIfam" id="TIGR00419">
    <property type="entry name" value="tim"/>
    <property type="match status" value="1"/>
</dbReference>
<dbReference type="PANTHER" id="PTHR21139">
    <property type="entry name" value="TRIOSEPHOSPHATE ISOMERASE"/>
    <property type="match status" value="1"/>
</dbReference>
<dbReference type="PANTHER" id="PTHR21139:SF42">
    <property type="entry name" value="TRIOSEPHOSPHATE ISOMERASE"/>
    <property type="match status" value="1"/>
</dbReference>
<dbReference type="Pfam" id="PF00121">
    <property type="entry name" value="TIM"/>
    <property type="match status" value="1"/>
</dbReference>
<dbReference type="SUPFAM" id="SSF51351">
    <property type="entry name" value="Triosephosphate isomerase (TIM)"/>
    <property type="match status" value="1"/>
</dbReference>
<dbReference type="PROSITE" id="PS00171">
    <property type="entry name" value="TIM_1"/>
    <property type="match status" value="1"/>
</dbReference>
<dbReference type="PROSITE" id="PS51440">
    <property type="entry name" value="TIM_2"/>
    <property type="match status" value="1"/>
</dbReference>
<keyword id="KW-0963">Cytoplasm</keyword>
<keyword id="KW-0312">Gluconeogenesis</keyword>
<keyword id="KW-0324">Glycolysis</keyword>
<keyword id="KW-0413">Isomerase</keyword>
<keyword id="KW-1185">Reference proteome</keyword>
<gene>
    <name evidence="1" type="primary">tpiA</name>
    <name type="ordered locus">DVU_1677</name>
</gene>
<comment type="function">
    <text evidence="1">Involved in the gluconeogenesis. Catalyzes stereospecifically the conversion of dihydroxyacetone phosphate (DHAP) to D-glyceraldehyde-3-phosphate (G3P).</text>
</comment>
<comment type="catalytic activity">
    <reaction evidence="1">
        <text>D-glyceraldehyde 3-phosphate = dihydroxyacetone phosphate</text>
        <dbReference type="Rhea" id="RHEA:18585"/>
        <dbReference type="ChEBI" id="CHEBI:57642"/>
        <dbReference type="ChEBI" id="CHEBI:59776"/>
        <dbReference type="EC" id="5.3.1.1"/>
    </reaction>
</comment>
<comment type="pathway">
    <text evidence="1">Carbohydrate biosynthesis; gluconeogenesis.</text>
</comment>
<comment type="pathway">
    <text evidence="1">Carbohydrate degradation; glycolysis; D-glyceraldehyde 3-phosphate from glycerone phosphate: step 1/1.</text>
</comment>
<comment type="subunit">
    <text evidence="1">Homodimer.</text>
</comment>
<comment type="subcellular location">
    <subcellularLocation>
        <location evidence="1">Cytoplasm</location>
    </subcellularLocation>
</comment>
<comment type="similarity">
    <text evidence="1">Belongs to the triosephosphate isomerase family.</text>
</comment>